<organism>
    <name type="scientific">Methylorubrum extorquens (strain PA1)</name>
    <name type="common">Methylobacterium extorquens</name>
    <dbReference type="NCBI Taxonomy" id="419610"/>
    <lineage>
        <taxon>Bacteria</taxon>
        <taxon>Pseudomonadati</taxon>
        <taxon>Pseudomonadota</taxon>
        <taxon>Alphaproteobacteria</taxon>
        <taxon>Hyphomicrobiales</taxon>
        <taxon>Methylobacteriaceae</taxon>
        <taxon>Methylorubrum</taxon>
    </lineage>
</organism>
<evidence type="ECO:0000255" key="1">
    <source>
        <dbReference type="HAMAP-Rule" id="MF_00057"/>
    </source>
</evidence>
<accession>A9VZK8</accession>
<comment type="function">
    <text evidence="1">Activates KDO (a required 8-carbon sugar) for incorporation into bacterial lipopolysaccharide in Gram-negative bacteria.</text>
</comment>
<comment type="catalytic activity">
    <reaction evidence="1">
        <text>3-deoxy-alpha-D-manno-oct-2-ulosonate + CTP = CMP-3-deoxy-beta-D-manno-octulosonate + diphosphate</text>
        <dbReference type="Rhea" id="RHEA:23448"/>
        <dbReference type="ChEBI" id="CHEBI:33019"/>
        <dbReference type="ChEBI" id="CHEBI:37563"/>
        <dbReference type="ChEBI" id="CHEBI:85986"/>
        <dbReference type="ChEBI" id="CHEBI:85987"/>
        <dbReference type="EC" id="2.7.7.38"/>
    </reaction>
</comment>
<comment type="pathway">
    <text evidence="1">Nucleotide-sugar biosynthesis; CMP-3-deoxy-D-manno-octulosonate biosynthesis; CMP-3-deoxy-D-manno-octulosonate from 3-deoxy-D-manno-octulosonate and CTP: step 1/1.</text>
</comment>
<comment type="pathway">
    <text evidence="1">Bacterial outer membrane biogenesis; lipopolysaccharide biosynthesis.</text>
</comment>
<comment type="subcellular location">
    <subcellularLocation>
        <location evidence="1">Cytoplasm</location>
    </subcellularLocation>
</comment>
<comment type="similarity">
    <text evidence="1">Belongs to the KdsB family.</text>
</comment>
<protein>
    <recommendedName>
        <fullName evidence="1">3-deoxy-manno-octulosonate cytidylyltransferase</fullName>
        <ecNumber evidence="1">2.7.7.38</ecNumber>
    </recommendedName>
    <alternativeName>
        <fullName evidence="1">CMP-2-keto-3-deoxyoctulosonic acid synthase</fullName>
        <shortName evidence="1">CKS</shortName>
        <shortName evidence="1">CMP-KDO synthase</shortName>
    </alternativeName>
</protein>
<name>KDSB_METEP</name>
<dbReference type="EC" id="2.7.7.38" evidence="1"/>
<dbReference type="EMBL" id="CP000908">
    <property type="protein sequence ID" value="ABY28764.1"/>
    <property type="molecule type" value="Genomic_DNA"/>
</dbReference>
<dbReference type="RefSeq" id="WP_003600755.1">
    <property type="nucleotide sequence ID" value="NC_010172.1"/>
</dbReference>
<dbReference type="SMR" id="A9VZK8"/>
<dbReference type="KEGG" id="mex:Mext_0340"/>
<dbReference type="eggNOG" id="COG1212">
    <property type="taxonomic scope" value="Bacteria"/>
</dbReference>
<dbReference type="HOGENOM" id="CLU_065038_0_1_5"/>
<dbReference type="BioCyc" id="MEXT419610:MEXT_RS01665-MONOMER"/>
<dbReference type="UniPathway" id="UPA00030"/>
<dbReference type="UniPathway" id="UPA00358">
    <property type="reaction ID" value="UER00476"/>
</dbReference>
<dbReference type="GO" id="GO:0005829">
    <property type="term" value="C:cytosol"/>
    <property type="evidence" value="ECO:0007669"/>
    <property type="project" value="TreeGrafter"/>
</dbReference>
<dbReference type="GO" id="GO:0008690">
    <property type="term" value="F:3-deoxy-manno-octulosonate cytidylyltransferase activity"/>
    <property type="evidence" value="ECO:0007669"/>
    <property type="project" value="UniProtKB-UniRule"/>
</dbReference>
<dbReference type="GO" id="GO:0033468">
    <property type="term" value="P:CMP-keto-3-deoxy-D-manno-octulosonic acid biosynthetic process"/>
    <property type="evidence" value="ECO:0007669"/>
    <property type="project" value="UniProtKB-UniRule"/>
</dbReference>
<dbReference type="GO" id="GO:0009103">
    <property type="term" value="P:lipopolysaccharide biosynthetic process"/>
    <property type="evidence" value="ECO:0007669"/>
    <property type="project" value="UniProtKB-UniRule"/>
</dbReference>
<dbReference type="CDD" id="cd02517">
    <property type="entry name" value="CMP-KDO-Synthetase"/>
    <property type="match status" value="1"/>
</dbReference>
<dbReference type="Gene3D" id="3.90.550.10">
    <property type="entry name" value="Spore Coat Polysaccharide Biosynthesis Protein SpsA, Chain A"/>
    <property type="match status" value="1"/>
</dbReference>
<dbReference type="HAMAP" id="MF_00057">
    <property type="entry name" value="KdsB"/>
    <property type="match status" value="1"/>
</dbReference>
<dbReference type="InterPro" id="IPR003329">
    <property type="entry name" value="Cytidylyl_trans"/>
</dbReference>
<dbReference type="InterPro" id="IPR004528">
    <property type="entry name" value="KdsB"/>
</dbReference>
<dbReference type="InterPro" id="IPR029044">
    <property type="entry name" value="Nucleotide-diphossugar_trans"/>
</dbReference>
<dbReference type="NCBIfam" id="TIGR00466">
    <property type="entry name" value="kdsB"/>
    <property type="match status" value="1"/>
</dbReference>
<dbReference type="NCBIfam" id="NF003948">
    <property type="entry name" value="PRK05450.1-1"/>
    <property type="match status" value="1"/>
</dbReference>
<dbReference type="NCBIfam" id="NF003952">
    <property type="entry name" value="PRK05450.1-5"/>
    <property type="match status" value="1"/>
</dbReference>
<dbReference type="PANTHER" id="PTHR42866">
    <property type="entry name" value="3-DEOXY-MANNO-OCTULOSONATE CYTIDYLYLTRANSFERASE"/>
    <property type="match status" value="1"/>
</dbReference>
<dbReference type="PANTHER" id="PTHR42866:SF2">
    <property type="entry name" value="3-DEOXY-MANNO-OCTULOSONATE CYTIDYLYLTRANSFERASE, MITOCHONDRIAL"/>
    <property type="match status" value="1"/>
</dbReference>
<dbReference type="Pfam" id="PF02348">
    <property type="entry name" value="CTP_transf_3"/>
    <property type="match status" value="1"/>
</dbReference>
<dbReference type="SUPFAM" id="SSF53448">
    <property type="entry name" value="Nucleotide-diphospho-sugar transferases"/>
    <property type="match status" value="1"/>
</dbReference>
<gene>
    <name evidence="1" type="primary">kdsB</name>
    <name type="ordered locus">Mext_0340</name>
</gene>
<feature type="chain" id="PRO_0000370096" description="3-deoxy-manno-octulosonate cytidylyltransferase">
    <location>
        <begin position="1"/>
        <end position="247"/>
    </location>
</feature>
<keyword id="KW-0963">Cytoplasm</keyword>
<keyword id="KW-0448">Lipopolysaccharide biosynthesis</keyword>
<keyword id="KW-0548">Nucleotidyltransferase</keyword>
<keyword id="KW-0808">Transferase</keyword>
<reference key="1">
    <citation type="submission" date="2007-12" db="EMBL/GenBank/DDBJ databases">
        <title>Complete sequence of Methylobacterium extorquens PA1.</title>
        <authorList>
            <consortium name="US DOE Joint Genome Institute"/>
            <person name="Copeland A."/>
            <person name="Lucas S."/>
            <person name="Lapidus A."/>
            <person name="Barry K."/>
            <person name="Glavina del Rio T."/>
            <person name="Dalin E."/>
            <person name="Tice H."/>
            <person name="Pitluck S."/>
            <person name="Saunders E."/>
            <person name="Brettin T."/>
            <person name="Bruce D."/>
            <person name="Detter J.C."/>
            <person name="Han C."/>
            <person name="Schmutz J."/>
            <person name="Larimer F."/>
            <person name="Land M."/>
            <person name="Hauser L."/>
            <person name="Kyrpides N."/>
            <person name="Kim E."/>
            <person name="Marx C."/>
            <person name="Richardson P."/>
        </authorList>
    </citation>
    <scope>NUCLEOTIDE SEQUENCE [LARGE SCALE GENOMIC DNA]</scope>
    <source>
        <strain>PA1</strain>
    </source>
</reference>
<proteinExistence type="inferred from homology"/>
<sequence length="247" mass="26668">MSDPLILIPARLAATRLPSKPLADIAGVPMIVHVWRRAVEAGIGPVVVATDTDAVAEVIEAQGGLAVMTRPDHPSGSDRLAEALEIVDPDGNHDVVVNVQGDLPTIDPAIIAASVMPLADPQVDIATLCAVIHRPEEMDDPNVVKIIGHTVGPNRLRALAFTRARAPWGDGPLFHHIGLYAYRRKALARFVALPQGELEQREKLEQLRALEAGMRIDAMIVEDLPLGVDTPADLERARTLLAIRRLN</sequence>